<name>FE45_SINFN</name>
<geneLocation type="plasmid">
    <name>sym pNGR234a</name>
</geneLocation>
<evidence type="ECO:0000250" key="1"/>
<evidence type="ECO:0000256" key="2">
    <source>
        <dbReference type="SAM" id="MobiDB-lite"/>
    </source>
</evidence>
<evidence type="ECO:0000305" key="3"/>
<accession>P55542</accession>
<proteinExistence type="predicted"/>
<sequence length="102" mass="10642">MRVVIDQDLCGTTGQCVLTLPGTFRQREPDGVAEVCVATVPQALHAAVRLAASQCPVAAIRVIESDAGDDERASADPARSPAEAERHAAKDQRIPGGHDGTV</sequence>
<protein>
    <recommendedName>
        <fullName>Uncharacterized P450-system 3Fe-4S ferredoxin y4lB</fullName>
    </recommendedName>
</protein>
<comment type="function">
    <text evidence="3">Electron transport protein for the cytochrome systems.</text>
</comment>
<comment type="cofactor">
    <cofactor evidence="3">
        <name>[3Fe-4S] cluster</name>
        <dbReference type="ChEBI" id="CHEBI:21137"/>
    </cofactor>
    <text evidence="3">Binds 1 [3Fe-4S] cluster.</text>
</comment>
<gene>
    <name type="ordered locus">NGR_a02720</name>
    <name type="ORF">y4lB</name>
</gene>
<keyword id="KW-0003">3Fe-4S</keyword>
<keyword id="KW-0249">Electron transport</keyword>
<keyword id="KW-0408">Iron</keyword>
<keyword id="KW-0411">Iron-sulfur</keyword>
<keyword id="KW-0479">Metal-binding</keyword>
<keyword id="KW-0614">Plasmid</keyword>
<keyword id="KW-1185">Reference proteome</keyword>
<keyword id="KW-0813">Transport</keyword>
<dbReference type="EMBL" id="U00090">
    <property type="protein sequence ID" value="AAB91755.1"/>
    <property type="molecule type" value="Genomic_DNA"/>
</dbReference>
<dbReference type="PIR" id="T10878">
    <property type="entry name" value="T10878"/>
</dbReference>
<dbReference type="RefSeq" id="NP_443953.1">
    <property type="nucleotide sequence ID" value="NC_000914.2"/>
</dbReference>
<dbReference type="RefSeq" id="WP_010875297.1">
    <property type="nucleotide sequence ID" value="NC_000914.2"/>
</dbReference>
<dbReference type="SMR" id="P55542"/>
<dbReference type="KEGG" id="rhi:NGR_a02720"/>
<dbReference type="PATRIC" id="fig|394.7.peg.290"/>
<dbReference type="eggNOG" id="COG1141">
    <property type="taxonomic scope" value="Bacteria"/>
</dbReference>
<dbReference type="HOGENOM" id="CLU_2275222_0_0_5"/>
<dbReference type="OrthoDB" id="3215002at2"/>
<dbReference type="Proteomes" id="UP000001054">
    <property type="component" value="Plasmid pNGR234a"/>
</dbReference>
<dbReference type="GO" id="GO:0051538">
    <property type="term" value="F:3 iron, 4 sulfur cluster binding"/>
    <property type="evidence" value="ECO:0007669"/>
    <property type="project" value="UniProtKB-KW"/>
</dbReference>
<dbReference type="GO" id="GO:0009055">
    <property type="term" value="F:electron transfer activity"/>
    <property type="evidence" value="ECO:0007669"/>
    <property type="project" value="InterPro"/>
</dbReference>
<dbReference type="GO" id="GO:0005506">
    <property type="term" value="F:iron ion binding"/>
    <property type="evidence" value="ECO:0007669"/>
    <property type="project" value="InterPro"/>
</dbReference>
<dbReference type="Gene3D" id="3.30.70.20">
    <property type="match status" value="1"/>
</dbReference>
<dbReference type="InterPro" id="IPR001080">
    <property type="entry name" value="3Fe4S_ferredoxin"/>
</dbReference>
<dbReference type="InterPro" id="IPR051269">
    <property type="entry name" value="Fe-S_cluster_ET"/>
</dbReference>
<dbReference type="PANTHER" id="PTHR36923">
    <property type="entry name" value="FERREDOXIN"/>
    <property type="match status" value="1"/>
</dbReference>
<dbReference type="PANTHER" id="PTHR36923:SF3">
    <property type="entry name" value="FERREDOXIN"/>
    <property type="match status" value="1"/>
</dbReference>
<dbReference type="Pfam" id="PF13459">
    <property type="entry name" value="Fer4_15"/>
    <property type="match status" value="1"/>
</dbReference>
<dbReference type="PRINTS" id="PR00352">
    <property type="entry name" value="3FE4SFRDOXIN"/>
</dbReference>
<dbReference type="SUPFAM" id="SSF54862">
    <property type="entry name" value="4Fe-4S ferredoxins"/>
    <property type="match status" value="1"/>
</dbReference>
<feature type="chain" id="PRO_0000159317" description="Uncharacterized P450-system 3Fe-4S ferredoxin y4lB">
    <location>
        <begin position="1"/>
        <end position="102"/>
    </location>
</feature>
<feature type="region of interest" description="Disordered" evidence="2">
    <location>
        <begin position="66"/>
        <end position="102"/>
    </location>
</feature>
<feature type="compositionally biased region" description="Basic and acidic residues" evidence="2">
    <location>
        <begin position="82"/>
        <end position="93"/>
    </location>
</feature>
<feature type="binding site" evidence="1">
    <location>
        <position position="10"/>
    </location>
    <ligand>
        <name>[3Fe-4S] cluster</name>
        <dbReference type="ChEBI" id="CHEBI:21137"/>
    </ligand>
</feature>
<feature type="binding site" evidence="1">
    <location>
        <position position="16"/>
    </location>
    <ligand>
        <name>[3Fe-4S] cluster</name>
        <dbReference type="ChEBI" id="CHEBI:21137"/>
    </ligand>
</feature>
<feature type="binding site" evidence="1">
    <location>
        <position position="55"/>
    </location>
    <ligand>
        <name>[3Fe-4S] cluster</name>
        <dbReference type="ChEBI" id="CHEBI:21137"/>
    </ligand>
</feature>
<reference key="1">
    <citation type="journal article" date="1997" name="Nature">
        <title>Molecular basis of symbiosis between Rhizobium and legumes.</title>
        <authorList>
            <person name="Freiberg C.A."/>
            <person name="Fellay R."/>
            <person name="Bairoch A."/>
            <person name="Broughton W.J."/>
            <person name="Rosenthal A."/>
            <person name="Perret X."/>
        </authorList>
    </citation>
    <scope>NUCLEOTIDE SEQUENCE [LARGE SCALE GENOMIC DNA]</scope>
    <source>
        <strain>NBRC 101917 / NGR234</strain>
    </source>
</reference>
<reference key="2">
    <citation type="journal article" date="2009" name="Appl. Environ. Microbiol.">
        <title>Rhizobium sp. strain NGR234 possesses a remarkable number of secretion systems.</title>
        <authorList>
            <person name="Schmeisser C."/>
            <person name="Liesegang H."/>
            <person name="Krysciak D."/>
            <person name="Bakkou N."/>
            <person name="Le Quere A."/>
            <person name="Wollherr A."/>
            <person name="Heinemeyer I."/>
            <person name="Morgenstern B."/>
            <person name="Pommerening-Roeser A."/>
            <person name="Flores M."/>
            <person name="Palacios R."/>
            <person name="Brenner S."/>
            <person name="Gottschalk G."/>
            <person name="Schmitz R.A."/>
            <person name="Broughton W.J."/>
            <person name="Perret X."/>
            <person name="Strittmatter A.W."/>
            <person name="Streit W.R."/>
        </authorList>
    </citation>
    <scope>NUCLEOTIDE SEQUENCE [LARGE SCALE GENOMIC DNA]</scope>
    <source>
        <strain>NBRC 101917 / NGR234</strain>
    </source>
</reference>
<organism>
    <name type="scientific">Sinorhizobium fredii (strain NBRC 101917 / NGR234)</name>
    <dbReference type="NCBI Taxonomy" id="394"/>
    <lineage>
        <taxon>Bacteria</taxon>
        <taxon>Pseudomonadati</taxon>
        <taxon>Pseudomonadota</taxon>
        <taxon>Alphaproteobacteria</taxon>
        <taxon>Hyphomicrobiales</taxon>
        <taxon>Rhizobiaceae</taxon>
        <taxon>Sinorhizobium/Ensifer group</taxon>
        <taxon>Sinorhizobium</taxon>
    </lineage>
</organism>